<sequence>MNNAIFPNKFKAALAAQQVQIGCWSALASPITTEVLGLAGFDWLVLDGEHAPNDVTTLIPQLMALKGSASAPVVRVPTNEPVIIKRMLDIGFYNFLIPFVETQEEAARAVASTRYPPEGIRGVSVSHRANMFGTVPDYFAQSNKNITIIVQIESQLGVDNVDAIAATEGVDGIFVGPSDLAAALGHLGNASHPDVQQTIQHIFARAKAHGKPCGILAPVEADARRYLEWGATFVAVGSDLGAFRASTQKLADTFKK</sequence>
<name>GARL_SALCH</name>
<reference key="1">
    <citation type="journal article" date="2005" name="Nucleic Acids Res.">
        <title>The genome sequence of Salmonella enterica serovar Choleraesuis, a highly invasive and resistant zoonotic pathogen.</title>
        <authorList>
            <person name="Chiu C.-H."/>
            <person name="Tang P."/>
            <person name="Chu C."/>
            <person name="Hu S."/>
            <person name="Bao Q."/>
            <person name="Yu J."/>
            <person name="Chou Y.-Y."/>
            <person name="Wang H.-S."/>
            <person name="Lee Y.-S."/>
        </authorList>
    </citation>
    <scope>NUCLEOTIDE SEQUENCE [LARGE SCALE GENOMIC DNA]</scope>
    <source>
        <strain>SC-B67</strain>
    </source>
</reference>
<evidence type="ECO:0000255" key="1">
    <source>
        <dbReference type="HAMAP-Rule" id="MF_01291"/>
    </source>
</evidence>
<protein>
    <recommendedName>
        <fullName evidence="1">5-keto-4-deoxy-D-glucarate aldolase</fullName>
        <shortName evidence="1">KDGluc aldolase</shortName>
        <shortName evidence="1">KDGlucA</shortName>
        <ecNumber evidence="1">4.1.2.20</ecNumber>
    </recommendedName>
    <alternativeName>
        <fullName evidence="1">2-dehydro-3-deoxy-D-glucarate aldolase</fullName>
    </alternativeName>
    <alternativeName>
        <fullName evidence="1">2-keto-3-deoxy-D-glucarate aldolase</fullName>
    </alternativeName>
    <alternativeName>
        <fullName evidence="1">5-dehydro-4-deoxy-D-glucarate aldolase</fullName>
    </alternativeName>
    <alternativeName>
        <fullName evidence="1">Alpha-keto-beta-deoxy-D-glucarate aldolase</fullName>
    </alternativeName>
</protein>
<feature type="chain" id="PRO_0000353154" description="5-keto-4-deoxy-D-glucarate aldolase">
    <location>
        <begin position="1"/>
        <end position="256"/>
    </location>
</feature>
<feature type="active site" description="Proton acceptor" evidence="1">
    <location>
        <position position="50"/>
    </location>
</feature>
<feature type="binding site" evidence="1">
    <location>
        <position position="151"/>
    </location>
    <ligand>
        <name>substrate</name>
    </ligand>
</feature>
<feature type="binding site" evidence="1">
    <location>
        <position position="153"/>
    </location>
    <ligand>
        <name>Mg(2+)</name>
        <dbReference type="ChEBI" id="CHEBI:18420"/>
    </ligand>
</feature>
<feature type="binding site" evidence="1">
    <location>
        <position position="178"/>
    </location>
    <ligand>
        <name>substrate</name>
    </ligand>
</feature>
<feature type="binding site" evidence="1">
    <location>
        <position position="179"/>
    </location>
    <ligand>
        <name>Mg(2+)</name>
        <dbReference type="ChEBI" id="CHEBI:18420"/>
    </ligand>
</feature>
<feature type="binding site" evidence="1">
    <location>
        <position position="179"/>
    </location>
    <ligand>
        <name>substrate</name>
    </ligand>
</feature>
<feature type="site" description="Transition state stabilizer" evidence="1">
    <location>
        <position position="75"/>
    </location>
</feature>
<feature type="site" description="Increases basicity of active site His" evidence="1">
    <location>
        <position position="89"/>
    </location>
</feature>
<proteinExistence type="inferred from homology"/>
<dbReference type="EC" id="4.1.2.20" evidence="1"/>
<dbReference type="EMBL" id="AE017220">
    <property type="protein sequence ID" value="AAX67102.1"/>
    <property type="molecule type" value="Genomic_DNA"/>
</dbReference>
<dbReference type="RefSeq" id="WP_001057715.1">
    <property type="nucleotide sequence ID" value="NC_006905.1"/>
</dbReference>
<dbReference type="SMR" id="Q57JL0"/>
<dbReference type="KEGG" id="sec:SCH_3196"/>
<dbReference type="HOGENOM" id="CLU_059964_1_0_6"/>
<dbReference type="UniPathway" id="UPA00565">
    <property type="reaction ID" value="UER00630"/>
</dbReference>
<dbReference type="Proteomes" id="UP000000538">
    <property type="component" value="Chromosome"/>
</dbReference>
<dbReference type="GO" id="GO:0005737">
    <property type="term" value="C:cytoplasm"/>
    <property type="evidence" value="ECO:0007669"/>
    <property type="project" value="TreeGrafter"/>
</dbReference>
<dbReference type="GO" id="GO:0008672">
    <property type="term" value="F:2-dehydro-3-deoxyglucarate aldolase activity"/>
    <property type="evidence" value="ECO:0007669"/>
    <property type="project" value="UniProtKB-UniRule"/>
</dbReference>
<dbReference type="GO" id="GO:0000287">
    <property type="term" value="F:magnesium ion binding"/>
    <property type="evidence" value="ECO:0007669"/>
    <property type="project" value="UniProtKB-UniRule"/>
</dbReference>
<dbReference type="GO" id="GO:0042838">
    <property type="term" value="P:D-glucarate catabolic process"/>
    <property type="evidence" value="ECO:0007669"/>
    <property type="project" value="UniProtKB-UniRule"/>
</dbReference>
<dbReference type="GO" id="GO:0046392">
    <property type="term" value="P:galactarate catabolic process"/>
    <property type="evidence" value="ECO:0007669"/>
    <property type="project" value="UniProtKB-UniRule"/>
</dbReference>
<dbReference type="FunFam" id="3.20.20.60:FF:000004">
    <property type="entry name" value="5-keto-4-deoxy-D-glucarate aldolase"/>
    <property type="match status" value="1"/>
</dbReference>
<dbReference type="Gene3D" id="3.20.20.60">
    <property type="entry name" value="Phosphoenolpyruvate-binding domains"/>
    <property type="match status" value="1"/>
</dbReference>
<dbReference type="HAMAP" id="MF_01291">
    <property type="entry name" value="KDGluc_aldolase"/>
    <property type="match status" value="1"/>
</dbReference>
<dbReference type="InterPro" id="IPR005000">
    <property type="entry name" value="Aldolase/citrate-lyase_domain"/>
</dbReference>
<dbReference type="InterPro" id="IPR017648">
    <property type="entry name" value="GarL"/>
</dbReference>
<dbReference type="InterPro" id="IPR050251">
    <property type="entry name" value="HpcH-HpaI_aldolase"/>
</dbReference>
<dbReference type="InterPro" id="IPR015813">
    <property type="entry name" value="Pyrv/PenolPyrv_kinase-like_dom"/>
</dbReference>
<dbReference type="InterPro" id="IPR040442">
    <property type="entry name" value="Pyrv_kinase-like_dom_sf"/>
</dbReference>
<dbReference type="NCBIfam" id="TIGR03239">
    <property type="entry name" value="GarL"/>
    <property type="match status" value="1"/>
</dbReference>
<dbReference type="NCBIfam" id="NF007849">
    <property type="entry name" value="PRK10558.1"/>
    <property type="match status" value="1"/>
</dbReference>
<dbReference type="PANTHER" id="PTHR30502">
    <property type="entry name" value="2-KETO-3-DEOXY-L-RHAMNONATE ALDOLASE"/>
    <property type="match status" value="1"/>
</dbReference>
<dbReference type="PANTHER" id="PTHR30502:SF4">
    <property type="entry name" value="5-KETO-4-DEOXY-D-GLUCARATE ALDOLASE"/>
    <property type="match status" value="1"/>
</dbReference>
<dbReference type="Pfam" id="PF03328">
    <property type="entry name" value="HpcH_HpaI"/>
    <property type="match status" value="1"/>
</dbReference>
<dbReference type="SUPFAM" id="SSF51621">
    <property type="entry name" value="Phosphoenolpyruvate/pyruvate domain"/>
    <property type="match status" value="1"/>
</dbReference>
<keyword id="KW-0456">Lyase</keyword>
<keyword id="KW-0460">Magnesium</keyword>
<keyword id="KW-0479">Metal-binding</keyword>
<accession>Q57JL0</accession>
<organism>
    <name type="scientific">Salmonella choleraesuis (strain SC-B67)</name>
    <dbReference type="NCBI Taxonomy" id="321314"/>
    <lineage>
        <taxon>Bacteria</taxon>
        <taxon>Pseudomonadati</taxon>
        <taxon>Pseudomonadota</taxon>
        <taxon>Gammaproteobacteria</taxon>
        <taxon>Enterobacterales</taxon>
        <taxon>Enterobacteriaceae</taxon>
        <taxon>Salmonella</taxon>
    </lineage>
</organism>
<comment type="function">
    <text evidence="1">Catalyzes the reversible retro-aldol cleavage of both 5-keto-4-deoxy-D-glucarate and 2-keto-3-deoxy-D-glucarate to pyruvate and tartronic semialdehyde.</text>
</comment>
<comment type="catalytic activity">
    <reaction evidence="1">
        <text>5-dehydro-4-deoxy-D-glucarate = 2-hydroxy-3-oxopropanoate + pyruvate</text>
        <dbReference type="Rhea" id="RHEA:27726"/>
        <dbReference type="ChEBI" id="CHEBI:15361"/>
        <dbReference type="ChEBI" id="CHEBI:42819"/>
        <dbReference type="ChEBI" id="CHEBI:57978"/>
    </reaction>
</comment>
<comment type="catalytic activity">
    <reaction evidence="1">
        <text>2-dehydro-3-deoxy-D-glucarate = 2-hydroxy-3-oxopropanoate + pyruvate</text>
        <dbReference type="Rhea" id="RHEA:10268"/>
        <dbReference type="ChEBI" id="CHEBI:15361"/>
        <dbReference type="ChEBI" id="CHEBI:57978"/>
        <dbReference type="ChEBI" id="CHEBI:58098"/>
        <dbReference type="EC" id="4.1.2.20"/>
    </reaction>
</comment>
<comment type="cofactor">
    <cofactor evidence="1">
        <name>Mg(2+)</name>
        <dbReference type="ChEBI" id="CHEBI:18420"/>
    </cofactor>
    <text evidence="1">Binds 1 Mg(2+) ion per subunit.</text>
</comment>
<comment type="pathway">
    <text evidence="1">Carbohydrate acid metabolism; galactarate degradation; D-glycerate from galactarate: step 2/3.</text>
</comment>
<comment type="subunit">
    <text evidence="1">Homohexamer; trimer of dimers.</text>
</comment>
<comment type="similarity">
    <text evidence="1">Belongs to the HpcH/HpaI aldolase family. KDGluc aldolase subfamily.</text>
</comment>
<gene>
    <name evidence="1" type="primary">garL</name>
    <name type="ordered locus">SCH_3196</name>
</gene>